<sequence>MLQTLFLTMLTLALVKSQYTEETITYTQCTDGYEWDPIRQQCKDIDECDIVPDACKGGMKCVNHYGGYLCLPKTAQIIVNNEHPQQETPAAEASSGATTGTVAARSMATSGVVPGGGFMASATAVAGPEVQTGRNNFVIRRNPADPQRIPSNPSHRIQCAAGYEQSEHNVCQDIDECTSGTHNCRTDQVCINLRGSFTCQCLPGYQKRGEQCVDIDECTVPPYCHQRCVNTPGSFYCQCSPGFQLAANNYTCVDINECDASNQCAQQCYNILGSFICQCNQGYELSSDRLNCEDIDECRTSSYLCQYQCVNEPGKFSCMCPQGYEVVRSRTCQDINECETTNECREDEMCWNYHGGFRCYPRNPCQDHYVLTSENRCVCPVSNTMCRELPQSIVYKYMSIRSDRSVPSDIFQIQATMIYANTINTFRIKSGNENGEFYLRQTSPVSAMLVLVKSLSGPREYIVDLEMLTVSSIGTFRTSSVLRLTIIVGPFSF</sequence>
<protein>
    <recommendedName>
        <fullName>EGF-containing fibulin-like extracellular matrix protein 1</fullName>
    </recommendedName>
    <alternativeName>
        <fullName>Fibulin-3</fullName>
        <shortName>FIBL-3</shortName>
    </alternativeName>
</protein>
<proteinExistence type="evidence at protein level"/>
<accession>Q8BPB5</accession>
<accession>Q6Y3N6</accession>
<keyword id="KW-0106">Calcium</keyword>
<keyword id="KW-1015">Disulfide bond</keyword>
<keyword id="KW-0245">EGF-like domain</keyword>
<keyword id="KW-0272">Extracellular matrix</keyword>
<keyword id="KW-0325">Glycoprotein</keyword>
<keyword id="KW-0339">Growth factor</keyword>
<keyword id="KW-1185">Reference proteome</keyword>
<keyword id="KW-0677">Repeat</keyword>
<keyword id="KW-0964">Secreted</keyword>
<keyword id="KW-0732">Signal</keyword>
<evidence type="ECO:0000250" key="1"/>
<evidence type="ECO:0000250" key="2">
    <source>
        <dbReference type="UniProtKB" id="O35568"/>
    </source>
</evidence>
<evidence type="ECO:0000250" key="3">
    <source>
        <dbReference type="UniProtKB" id="Q12805"/>
    </source>
</evidence>
<evidence type="ECO:0000255" key="4"/>
<evidence type="ECO:0000255" key="5">
    <source>
        <dbReference type="PROSITE-ProRule" id="PRU00076"/>
    </source>
</evidence>
<evidence type="ECO:0000269" key="6">
    <source>
    </source>
</evidence>
<evidence type="ECO:0000269" key="7">
    <source>
    </source>
</evidence>
<evidence type="ECO:0000305" key="8"/>
<reference key="1">
    <citation type="journal article" date="2003" name="Gene Expr. Patterns">
        <title>Cloning, expression and characterization of the murine Efemp1, a gene mutated in Doyne-Honeycomb retinal dystrophy.</title>
        <authorList>
            <person name="Ehlermann J."/>
            <person name="Weber S."/>
            <person name="Pfisterer P."/>
            <person name="Schorle H."/>
        </authorList>
    </citation>
    <scope>NUCLEOTIDE SEQUENCE [MRNA]</scope>
    <source>
        <strain>C57BL/6J</strain>
    </source>
</reference>
<reference key="2">
    <citation type="journal article" date="2005" name="Science">
        <title>The transcriptional landscape of the mammalian genome.</title>
        <authorList>
            <person name="Carninci P."/>
            <person name="Kasukawa T."/>
            <person name="Katayama S."/>
            <person name="Gough J."/>
            <person name="Frith M.C."/>
            <person name="Maeda N."/>
            <person name="Oyama R."/>
            <person name="Ravasi T."/>
            <person name="Lenhard B."/>
            <person name="Wells C."/>
            <person name="Kodzius R."/>
            <person name="Shimokawa K."/>
            <person name="Bajic V.B."/>
            <person name="Brenner S.E."/>
            <person name="Batalov S."/>
            <person name="Forrest A.R."/>
            <person name="Zavolan M."/>
            <person name="Davis M.J."/>
            <person name="Wilming L.G."/>
            <person name="Aidinis V."/>
            <person name="Allen J.E."/>
            <person name="Ambesi-Impiombato A."/>
            <person name="Apweiler R."/>
            <person name="Aturaliya R.N."/>
            <person name="Bailey T.L."/>
            <person name="Bansal M."/>
            <person name="Baxter L."/>
            <person name="Beisel K.W."/>
            <person name="Bersano T."/>
            <person name="Bono H."/>
            <person name="Chalk A.M."/>
            <person name="Chiu K.P."/>
            <person name="Choudhary V."/>
            <person name="Christoffels A."/>
            <person name="Clutterbuck D.R."/>
            <person name="Crowe M.L."/>
            <person name="Dalla E."/>
            <person name="Dalrymple B.P."/>
            <person name="de Bono B."/>
            <person name="Della Gatta G."/>
            <person name="di Bernardo D."/>
            <person name="Down T."/>
            <person name="Engstrom P."/>
            <person name="Fagiolini M."/>
            <person name="Faulkner G."/>
            <person name="Fletcher C.F."/>
            <person name="Fukushima T."/>
            <person name="Furuno M."/>
            <person name="Futaki S."/>
            <person name="Gariboldi M."/>
            <person name="Georgii-Hemming P."/>
            <person name="Gingeras T.R."/>
            <person name="Gojobori T."/>
            <person name="Green R.E."/>
            <person name="Gustincich S."/>
            <person name="Harbers M."/>
            <person name="Hayashi Y."/>
            <person name="Hensch T.K."/>
            <person name="Hirokawa N."/>
            <person name="Hill D."/>
            <person name="Huminiecki L."/>
            <person name="Iacono M."/>
            <person name="Ikeo K."/>
            <person name="Iwama A."/>
            <person name="Ishikawa T."/>
            <person name="Jakt M."/>
            <person name="Kanapin A."/>
            <person name="Katoh M."/>
            <person name="Kawasawa Y."/>
            <person name="Kelso J."/>
            <person name="Kitamura H."/>
            <person name="Kitano H."/>
            <person name="Kollias G."/>
            <person name="Krishnan S.P."/>
            <person name="Kruger A."/>
            <person name="Kummerfeld S.K."/>
            <person name="Kurochkin I.V."/>
            <person name="Lareau L.F."/>
            <person name="Lazarevic D."/>
            <person name="Lipovich L."/>
            <person name="Liu J."/>
            <person name="Liuni S."/>
            <person name="McWilliam S."/>
            <person name="Madan Babu M."/>
            <person name="Madera M."/>
            <person name="Marchionni L."/>
            <person name="Matsuda H."/>
            <person name="Matsuzawa S."/>
            <person name="Miki H."/>
            <person name="Mignone F."/>
            <person name="Miyake S."/>
            <person name="Morris K."/>
            <person name="Mottagui-Tabar S."/>
            <person name="Mulder N."/>
            <person name="Nakano N."/>
            <person name="Nakauchi H."/>
            <person name="Ng P."/>
            <person name="Nilsson R."/>
            <person name="Nishiguchi S."/>
            <person name="Nishikawa S."/>
            <person name="Nori F."/>
            <person name="Ohara O."/>
            <person name="Okazaki Y."/>
            <person name="Orlando V."/>
            <person name="Pang K.C."/>
            <person name="Pavan W.J."/>
            <person name="Pavesi G."/>
            <person name="Pesole G."/>
            <person name="Petrovsky N."/>
            <person name="Piazza S."/>
            <person name="Reed J."/>
            <person name="Reid J.F."/>
            <person name="Ring B.Z."/>
            <person name="Ringwald M."/>
            <person name="Rost B."/>
            <person name="Ruan Y."/>
            <person name="Salzberg S.L."/>
            <person name="Sandelin A."/>
            <person name="Schneider C."/>
            <person name="Schoenbach C."/>
            <person name="Sekiguchi K."/>
            <person name="Semple C.A."/>
            <person name="Seno S."/>
            <person name="Sessa L."/>
            <person name="Sheng Y."/>
            <person name="Shibata Y."/>
            <person name="Shimada H."/>
            <person name="Shimada K."/>
            <person name="Silva D."/>
            <person name="Sinclair B."/>
            <person name="Sperling S."/>
            <person name="Stupka E."/>
            <person name="Sugiura K."/>
            <person name="Sultana R."/>
            <person name="Takenaka Y."/>
            <person name="Taki K."/>
            <person name="Tammoja K."/>
            <person name="Tan S.L."/>
            <person name="Tang S."/>
            <person name="Taylor M.S."/>
            <person name="Tegner J."/>
            <person name="Teichmann S.A."/>
            <person name="Ueda H.R."/>
            <person name="van Nimwegen E."/>
            <person name="Verardo R."/>
            <person name="Wei C.L."/>
            <person name="Yagi K."/>
            <person name="Yamanishi H."/>
            <person name="Zabarovsky E."/>
            <person name="Zhu S."/>
            <person name="Zimmer A."/>
            <person name="Hide W."/>
            <person name="Bult C."/>
            <person name="Grimmond S.M."/>
            <person name="Teasdale R.D."/>
            <person name="Liu E.T."/>
            <person name="Brusic V."/>
            <person name="Quackenbush J."/>
            <person name="Wahlestedt C."/>
            <person name="Mattick J.S."/>
            <person name="Hume D.A."/>
            <person name="Kai C."/>
            <person name="Sasaki D."/>
            <person name="Tomaru Y."/>
            <person name="Fukuda S."/>
            <person name="Kanamori-Katayama M."/>
            <person name="Suzuki M."/>
            <person name="Aoki J."/>
            <person name="Arakawa T."/>
            <person name="Iida J."/>
            <person name="Imamura K."/>
            <person name="Itoh M."/>
            <person name="Kato T."/>
            <person name="Kawaji H."/>
            <person name="Kawagashira N."/>
            <person name="Kawashima T."/>
            <person name="Kojima M."/>
            <person name="Kondo S."/>
            <person name="Konno H."/>
            <person name="Nakano K."/>
            <person name="Ninomiya N."/>
            <person name="Nishio T."/>
            <person name="Okada M."/>
            <person name="Plessy C."/>
            <person name="Shibata K."/>
            <person name="Shiraki T."/>
            <person name="Suzuki S."/>
            <person name="Tagami M."/>
            <person name="Waki K."/>
            <person name="Watahiki A."/>
            <person name="Okamura-Oho Y."/>
            <person name="Suzuki H."/>
            <person name="Kawai J."/>
            <person name="Hayashizaki Y."/>
        </authorList>
    </citation>
    <scope>NUCLEOTIDE SEQUENCE [LARGE SCALE MRNA]</scope>
    <source>
        <strain>C57BL/6J</strain>
        <tissue>Xiphoid cartilage</tissue>
    </source>
</reference>
<reference key="3">
    <citation type="journal article" date="2009" name="PLoS Biol.">
        <title>Lineage-specific biology revealed by a finished genome assembly of the mouse.</title>
        <authorList>
            <person name="Church D.M."/>
            <person name="Goodstadt L."/>
            <person name="Hillier L.W."/>
            <person name="Zody M.C."/>
            <person name="Goldstein S."/>
            <person name="She X."/>
            <person name="Bult C.J."/>
            <person name="Agarwala R."/>
            <person name="Cherry J.L."/>
            <person name="DiCuccio M."/>
            <person name="Hlavina W."/>
            <person name="Kapustin Y."/>
            <person name="Meric P."/>
            <person name="Maglott D."/>
            <person name="Birtle Z."/>
            <person name="Marques A.C."/>
            <person name="Graves T."/>
            <person name="Zhou S."/>
            <person name="Teague B."/>
            <person name="Potamousis K."/>
            <person name="Churas C."/>
            <person name="Place M."/>
            <person name="Herschleb J."/>
            <person name="Runnheim R."/>
            <person name="Forrest D."/>
            <person name="Amos-Landgraf J."/>
            <person name="Schwartz D.C."/>
            <person name="Cheng Z."/>
            <person name="Lindblad-Toh K."/>
            <person name="Eichler E.E."/>
            <person name="Ponting C.P."/>
        </authorList>
    </citation>
    <scope>NUCLEOTIDE SEQUENCE [LARGE SCALE GENOMIC DNA]</scope>
    <source>
        <strain>C57BL/6J</strain>
    </source>
</reference>
<reference key="4">
    <citation type="journal article" date="2007" name="Hum. Mol. Genet.">
        <title>Lack of fibulin-3 causes early aging and herniation, but not macular degeneration in mice.</title>
        <authorList>
            <person name="McLaughlin P.J."/>
            <person name="Bakall B."/>
            <person name="Choi J."/>
            <person name="Liu Z."/>
            <person name="Sasaki T."/>
            <person name="Davis E.C."/>
            <person name="Marmorstein A.D."/>
            <person name="Marmorstein L.Y."/>
        </authorList>
    </citation>
    <scope>DISRUPTION PHENOTYPE</scope>
</reference>
<reference key="5">
    <citation type="journal article" date="2010" name="Cell">
        <title>A tissue-specific atlas of mouse protein phosphorylation and expression.</title>
        <authorList>
            <person name="Huttlin E.L."/>
            <person name="Jedrychowski M.P."/>
            <person name="Elias J.E."/>
            <person name="Goswami T."/>
            <person name="Rad R."/>
            <person name="Beausoleil S.A."/>
            <person name="Villen J."/>
            <person name="Haas W."/>
            <person name="Sowa M.E."/>
            <person name="Gygi S.P."/>
        </authorList>
    </citation>
    <scope>IDENTIFICATION BY MASS SPECTROMETRY [LARGE SCALE ANALYSIS]</scope>
    <source>
        <tissue>Heart</tissue>
        <tissue>Kidney</tissue>
        <tissue>Lung</tissue>
        <tissue>Spleen</tissue>
        <tissue>Testis</tissue>
    </source>
</reference>
<reference key="6">
    <citation type="journal article" date="2015" name="PLoS ONE">
        <title>Exome sequencing identifies a missense variant in EFEMP1 co-segregating in a family with autosomal dominant primary open-angle glaucoma.</title>
        <authorList>
            <person name="Mackay D.S."/>
            <person name="Bennett T.M."/>
            <person name="Shiels A."/>
        </authorList>
    </citation>
    <scope>DEVELOPMENTAL STAGE</scope>
    <scope>SUBCELLULAR LOCATION</scope>
    <scope>TISSUE SPECIFICITY</scope>
</reference>
<dbReference type="EMBL" id="AY251056">
    <property type="protein sequence ID" value="AAP79577.1"/>
    <property type="molecule type" value="mRNA"/>
</dbReference>
<dbReference type="EMBL" id="AY185605">
    <property type="protein sequence ID" value="AAO37642.1"/>
    <property type="molecule type" value="mRNA"/>
</dbReference>
<dbReference type="EMBL" id="AK077302">
    <property type="protein sequence ID" value="BAC36738.1"/>
    <property type="molecule type" value="mRNA"/>
</dbReference>
<dbReference type="EMBL" id="AL954346">
    <property type="status" value="NOT_ANNOTATED_CDS"/>
    <property type="molecule type" value="Genomic_DNA"/>
</dbReference>
<dbReference type="CCDS" id="CCDS48761.1"/>
<dbReference type="RefSeq" id="NP_666127.2">
    <property type="nucleotide sequence ID" value="NM_146015.2"/>
</dbReference>
<dbReference type="RefSeq" id="XP_006514723.1">
    <property type="nucleotide sequence ID" value="XM_006514660.1"/>
</dbReference>
<dbReference type="BioGRID" id="229766">
    <property type="interactions" value="3"/>
</dbReference>
<dbReference type="FunCoup" id="Q8BPB5">
    <property type="interactions" value="187"/>
</dbReference>
<dbReference type="IntAct" id="Q8BPB5">
    <property type="interactions" value="2"/>
</dbReference>
<dbReference type="STRING" id="10090.ENSMUSP00000020759"/>
<dbReference type="GlyCosmos" id="Q8BPB5">
    <property type="glycosylation" value="1 site, No reported glycans"/>
</dbReference>
<dbReference type="GlyGen" id="Q8BPB5">
    <property type="glycosylation" value="2 sites, 1 O-linked glycan (1 site)"/>
</dbReference>
<dbReference type="iPTMnet" id="Q8BPB5"/>
<dbReference type="PhosphoSitePlus" id="Q8BPB5"/>
<dbReference type="SwissPalm" id="Q8BPB5"/>
<dbReference type="CPTAC" id="non-CPTAC-3805"/>
<dbReference type="CPTAC" id="non-CPTAC-5606"/>
<dbReference type="PaxDb" id="10090-ENSMUSP00000020759"/>
<dbReference type="PeptideAtlas" id="Q8BPB5"/>
<dbReference type="ProteomicsDB" id="271874"/>
<dbReference type="Pumba" id="Q8BPB5"/>
<dbReference type="Antibodypedia" id="30453">
    <property type="antibodies" value="390 antibodies from 37 providers"/>
</dbReference>
<dbReference type="DNASU" id="216616"/>
<dbReference type="Ensembl" id="ENSMUST00000020759.12">
    <property type="protein sequence ID" value="ENSMUSP00000020759.6"/>
    <property type="gene ID" value="ENSMUSG00000020467.16"/>
</dbReference>
<dbReference type="GeneID" id="216616"/>
<dbReference type="KEGG" id="mmu:216616"/>
<dbReference type="UCSC" id="uc007ign.2">
    <property type="organism name" value="mouse"/>
</dbReference>
<dbReference type="AGR" id="MGI:1339998"/>
<dbReference type="CTD" id="2202"/>
<dbReference type="MGI" id="MGI:1339998">
    <property type="gene designation" value="Efemp1"/>
</dbReference>
<dbReference type="VEuPathDB" id="HostDB:ENSMUSG00000020467"/>
<dbReference type="eggNOG" id="KOG1217">
    <property type="taxonomic scope" value="Eukaryota"/>
</dbReference>
<dbReference type="GeneTree" id="ENSGT00940000157837"/>
<dbReference type="HOGENOM" id="CLU_004826_0_1_1"/>
<dbReference type="InParanoid" id="Q8BPB5"/>
<dbReference type="OMA" id="CETRNEC"/>
<dbReference type="OrthoDB" id="4062651at2759"/>
<dbReference type="PhylomeDB" id="Q8BPB5"/>
<dbReference type="TreeFam" id="TF317514"/>
<dbReference type="BioGRID-ORCS" id="216616">
    <property type="hits" value="3 hits in 76 CRISPR screens"/>
</dbReference>
<dbReference type="PRO" id="PR:Q8BPB5"/>
<dbReference type="Proteomes" id="UP000000589">
    <property type="component" value="Chromosome 11"/>
</dbReference>
<dbReference type="RNAct" id="Q8BPB5">
    <property type="molecule type" value="protein"/>
</dbReference>
<dbReference type="Bgee" id="ENSMUSG00000020467">
    <property type="expression patterns" value="Expressed in ciliary body and 243 other cell types or tissues"/>
</dbReference>
<dbReference type="ExpressionAtlas" id="Q8BPB5">
    <property type="expression patterns" value="baseline and differential"/>
</dbReference>
<dbReference type="GO" id="GO:0062023">
    <property type="term" value="C:collagen-containing extracellular matrix"/>
    <property type="evidence" value="ECO:0007005"/>
    <property type="project" value="BHF-UCL"/>
</dbReference>
<dbReference type="GO" id="GO:0031012">
    <property type="term" value="C:extracellular matrix"/>
    <property type="evidence" value="ECO:0000250"/>
    <property type="project" value="UniProtKB"/>
</dbReference>
<dbReference type="GO" id="GO:0005615">
    <property type="term" value="C:extracellular space"/>
    <property type="evidence" value="ECO:0007005"/>
    <property type="project" value="BHF-UCL"/>
</dbReference>
<dbReference type="GO" id="GO:0005509">
    <property type="term" value="F:calcium ion binding"/>
    <property type="evidence" value="ECO:0007669"/>
    <property type="project" value="InterPro"/>
</dbReference>
<dbReference type="GO" id="GO:0005006">
    <property type="term" value="F:epidermal growth factor receptor activity"/>
    <property type="evidence" value="ECO:0000250"/>
    <property type="project" value="UniProtKB"/>
</dbReference>
<dbReference type="GO" id="GO:0005154">
    <property type="term" value="F:epidermal growth factor receptor binding"/>
    <property type="evidence" value="ECO:0000250"/>
    <property type="project" value="UniProtKB"/>
</dbReference>
<dbReference type="GO" id="GO:0008083">
    <property type="term" value="F:growth factor activity"/>
    <property type="evidence" value="ECO:0007669"/>
    <property type="project" value="UniProtKB-KW"/>
</dbReference>
<dbReference type="GO" id="GO:0043010">
    <property type="term" value="P:camera-type eye development"/>
    <property type="evidence" value="ECO:0007669"/>
    <property type="project" value="Ensembl"/>
</dbReference>
<dbReference type="GO" id="GO:0048048">
    <property type="term" value="P:embryonic eye morphogenesis"/>
    <property type="evidence" value="ECO:0007669"/>
    <property type="project" value="Ensembl"/>
</dbReference>
<dbReference type="GO" id="GO:0007173">
    <property type="term" value="P:epidermal growth factor receptor signaling pathway"/>
    <property type="evidence" value="ECO:0000250"/>
    <property type="project" value="UniProtKB"/>
</dbReference>
<dbReference type="GO" id="GO:0032331">
    <property type="term" value="P:negative regulation of chondrocyte differentiation"/>
    <property type="evidence" value="ECO:0000250"/>
    <property type="project" value="UniProtKB"/>
</dbReference>
<dbReference type="GO" id="GO:0018108">
    <property type="term" value="P:peptidyl-tyrosine phosphorylation"/>
    <property type="evidence" value="ECO:0000250"/>
    <property type="project" value="UniProtKB"/>
</dbReference>
<dbReference type="GO" id="GO:0048050">
    <property type="term" value="P:post-embryonic eye morphogenesis"/>
    <property type="evidence" value="ECO:0007669"/>
    <property type="project" value="Ensembl"/>
</dbReference>
<dbReference type="GO" id="GO:0006355">
    <property type="term" value="P:regulation of DNA-templated transcription"/>
    <property type="evidence" value="ECO:0000250"/>
    <property type="project" value="UniProtKB"/>
</dbReference>
<dbReference type="CDD" id="cd00054">
    <property type="entry name" value="EGF_CA"/>
    <property type="match status" value="4"/>
</dbReference>
<dbReference type="FunFam" id="2.10.25.10:FF:000323">
    <property type="entry name" value="EGF-containing fibulin-like extracellular matrix protein 1"/>
    <property type="match status" value="1"/>
</dbReference>
<dbReference type="FunFam" id="2.10.25.10:FF:000380">
    <property type="entry name" value="EGF-containing fibulin-like extracellular matrix protein 1"/>
    <property type="match status" value="1"/>
</dbReference>
<dbReference type="FunFam" id="2.10.25.10:FF:000418">
    <property type="entry name" value="EGF-containing fibulin-like extracellular matrix protein 1"/>
    <property type="match status" value="1"/>
</dbReference>
<dbReference type="FunFam" id="2.10.25.10:FF:000201">
    <property type="entry name" value="EGF-containing fibulin-like extracellular matrix protein 2"/>
    <property type="match status" value="1"/>
</dbReference>
<dbReference type="Gene3D" id="2.10.25.10">
    <property type="entry name" value="Laminin"/>
    <property type="match status" value="5"/>
</dbReference>
<dbReference type="InterPro" id="IPR026823">
    <property type="entry name" value="cEGF"/>
</dbReference>
<dbReference type="InterPro" id="IPR050751">
    <property type="entry name" value="ECM_structural_protein"/>
</dbReference>
<dbReference type="InterPro" id="IPR001881">
    <property type="entry name" value="EGF-like_Ca-bd_dom"/>
</dbReference>
<dbReference type="InterPro" id="IPR000742">
    <property type="entry name" value="EGF-like_dom"/>
</dbReference>
<dbReference type="InterPro" id="IPR000152">
    <property type="entry name" value="EGF-type_Asp/Asn_hydroxyl_site"/>
</dbReference>
<dbReference type="InterPro" id="IPR018097">
    <property type="entry name" value="EGF_Ca-bd_CS"/>
</dbReference>
<dbReference type="InterPro" id="IPR055088">
    <property type="entry name" value="Fibulin_C"/>
</dbReference>
<dbReference type="InterPro" id="IPR009030">
    <property type="entry name" value="Growth_fac_rcpt_cys_sf"/>
</dbReference>
<dbReference type="InterPro" id="IPR049883">
    <property type="entry name" value="NOTCH1_EGF-like"/>
</dbReference>
<dbReference type="PANTHER" id="PTHR24034:SF102">
    <property type="entry name" value="EGF-CONTAINING FIBULIN-LIKE EXTRACELLULAR MATRIX PROTEIN 1"/>
    <property type="match status" value="1"/>
</dbReference>
<dbReference type="PANTHER" id="PTHR24034">
    <property type="entry name" value="EGF-LIKE DOMAIN-CONTAINING PROTEIN"/>
    <property type="match status" value="1"/>
</dbReference>
<dbReference type="Pfam" id="PF12662">
    <property type="entry name" value="cEGF"/>
    <property type="match status" value="3"/>
</dbReference>
<dbReference type="Pfam" id="PF07645">
    <property type="entry name" value="EGF_CA"/>
    <property type="match status" value="2"/>
</dbReference>
<dbReference type="Pfam" id="PF22914">
    <property type="entry name" value="Fibulin_C"/>
    <property type="match status" value="1"/>
</dbReference>
<dbReference type="SMART" id="SM00181">
    <property type="entry name" value="EGF"/>
    <property type="match status" value="5"/>
</dbReference>
<dbReference type="SMART" id="SM00179">
    <property type="entry name" value="EGF_CA"/>
    <property type="match status" value="6"/>
</dbReference>
<dbReference type="SUPFAM" id="SSF57184">
    <property type="entry name" value="Growth factor receptor domain"/>
    <property type="match status" value="2"/>
</dbReference>
<dbReference type="PROSITE" id="PS00010">
    <property type="entry name" value="ASX_HYDROXYL"/>
    <property type="match status" value="4"/>
</dbReference>
<dbReference type="PROSITE" id="PS01186">
    <property type="entry name" value="EGF_2"/>
    <property type="match status" value="4"/>
</dbReference>
<dbReference type="PROSITE" id="PS50026">
    <property type="entry name" value="EGF_3"/>
    <property type="match status" value="4"/>
</dbReference>
<dbReference type="PROSITE" id="PS01187">
    <property type="entry name" value="EGF_CA"/>
    <property type="match status" value="6"/>
</dbReference>
<gene>
    <name type="primary">Efemp1</name>
    <name type="synonym">Fbln3</name>
</gene>
<organism>
    <name type="scientific">Mus musculus</name>
    <name type="common">Mouse</name>
    <dbReference type="NCBI Taxonomy" id="10090"/>
    <lineage>
        <taxon>Eukaryota</taxon>
        <taxon>Metazoa</taxon>
        <taxon>Chordata</taxon>
        <taxon>Craniata</taxon>
        <taxon>Vertebrata</taxon>
        <taxon>Euteleostomi</taxon>
        <taxon>Mammalia</taxon>
        <taxon>Eutheria</taxon>
        <taxon>Euarchontoglires</taxon>
        <taxon>Glires</taxon>
        <taxon>Rodentia</taxon>
        <taxon>Myomorpha</taxon>
        <taxon>Muroidea</taxon>
        <taxon>Muridae</taxon>
        <taxon>Murinae</taxon>
        <taxon>Mus</taxon>
        <taxon>Mus</taxon>
    </lineage>
</organism>
<feature type="signal peptide" evidence="4">
    <location>
        <begin position="1"/>
        <end position="17"/>
    </location>
</feature>
<feature type="chain" id="PRO_0000007572" description="EGF-containing fibulin-like extracellular matrix protein 1">
    <location>
        <begin position="18"/>
        <end position="493"/>
    </location>
</feature>
<feature type="domain" description="EGF-like 1; atypical" evidence="5">
    <location>
        <begin position="26"/>
        <end position="71"/>
    </location>
</feature>
<feature type="domain" description="EGF-like 2; calcium-binding" evidence="5">
    <location>
        <begin position="173"/>
        <end position="213"/>
    </location>
</feature>
<feature type="domain" description="EGF-like 3; calcium-binding" evidence="5">
    <location>
        <begin position="214"/>
        <end position="253"/>
    </location>
</feature>
<feature type="domain" description="EGF-like 4; calcium-binding" evidence="5">
    <location>
        <begin position="254"/>
        <end position="293"/>
    </location>
</feature>
<feature type="domain" description="EGF-like 5; calcium-binding" evidence="5">
    <location>
        <begin position="294"/>
        <end position="333"/>
    </location>
</feature>
<feature type="domain" description="EGF-like 6; calcium-binding" evidence="5">
    <location>
        <begin position="334"/>
        <end position="378"/>
    </location>
</feature>
<feature type="region of interest" description="Mediates interaction with TIMP3" evidence="1">
    <location>
        <begin position="259"/>
        <end position="493"/>
    </location>
</feature>
<feature type="glycosylation site" description="N-linked (GlcNAc...) asparagine" evidence="4">
    <location>
        <position position="249"/>
    </location>
</feature>
<feature type="disulfide bond" evidence="5">
    <location>
        <begin position="177"/>
        <end position="190"/>
    </location>
</feature>
<feature type="disulfide bond" evidence="5">
    <location>
        <begin position="184"/>
        <end position="199"/>
    </location>
</feature>
<feature type="disulfide bond" evidence="5">
    <location>
        <begin position="201"/>
        <end position="212"/>
    </location>
</feature>
<feature type="disulfide bond" evidence="5">
    <location>
        <begin position="218"/>
        <end position="228"/>
    </location>
</feature>
<feature type="disulfide bond" evidence="5">
    <location>
        <begin position="224"/>
        <end position="237"/>
    </location>
</feature>
<feature type="disulfide bond" evidence="5">
    <location>
        <begin position="239"/>
        <end position="252"/>
    </location>
</feature>
<feature type="disulfide bond" evidence="5">
    <location>
        <begin position="258"/>
        <end position="268"/>
    </location>
</feature>
<feature type="disulfide bond" evidence="5">
    <location>
        <begin position="264"/>
        <end position="277"/>
    </location>
</feature>
<feature type="disulfide bond" evidence="5">
    <location>
        <begin position="279"/>
        <end position="292"/>
    </location>
</feature>
<feature type="disulfide bond" evidence="5">
    <location>
        <begin position="298"/>
        <end position="309"/>
    </location>
</feature>
<feature type="disulfide bond" evidence="5">
    <location>
        <begin position="305"/>
        <end position="318"/>
    </location>
</feature>
<feature type="disulfide bond" evidence="5">
    <location>
        <begin position="320"/>
        <end position="332"/>
    </location>
</feature>
<feature type="disulfide bond" evidence="5">
    <location>
        <begin position="338"/>
        <end position="350"/>
    </location>
</feature>
<feature type="disulfide bond" evidence="5">
    <location>
        <begin position="344"/>
        <end position="359"/>
    </location>
</feature>
<feature type="disulfide bond" evidence="5">
    <location>
        <begin position="365"/>
        <end position="377"/>
    </location>
</feature>
<name>FBLN3_MOUSE</name>
<comment type="function">
    <text evidence="3">Binds EGFR, the EGF receptor, inducing EGFR autophosphorylation and the activation of downstream signaling pathways. May play a role in cell adhesion and migration. May function as a negative regulator of chondrocyte differentiation. In the olfactory epithelium, it may regulate glial cell migration, differentiation and the ability of glial cells to support neuronal neurite outgrowth (By similarity).</text>
</comment>
<comment type="subunit">
    <text evidence="3">Interacts with ECM1. Interacts with TIMP3.</text>
</comment>
<comment type="subcellular location">
    <subcellularLocation>
        <location evidence="7">Secreted</location>
        <location evidence="7">Extracellular space</location>
        <location evidence="7">Extracellular matrix</location>
    </subcellularLocation>
    <text evidence="2">Localizes to the lamina propria underneath the olfactory epithelium.</text>
</comment>
<comment type="tissue specificity">
    <text evidence="7">Expressed in the eye in the ciliary body, cornea, inner nuclear layer of the retina, and in the optic disk.</text>
</comment>
<comment type="developmental stage">
    <text evidence="7">Expressed in the eye cornea at posnatal day 22 (P22).</text>
</comment>
<comment type="disruption phenotype">
    <text evidence="6">Mice are viable and have no overt phenotype at birth. However, they exhibit reduced reproductivity and an early onset of aging-associated phenotypes including reduced lifespan, decreased body mass, lordokyphosis, reduced hair growth and generalized fat, muscle and organ atrophy. They also display multiple hernias associated with a reduction of elastic fibers in facia, the thin layer of connective tissue maintaining and protecting structures throughout the body. However, there is no apparent macular degeneration.</text>
</comment>
<comment type="similarity">
    <text evidence="8">Belongs to the fibulin family.</text>
</comment>